<gene>
    <name evidence="1" type="primary">pyrE</name>
    <name type="ordered locus">ELI_02720</name>
</gene>
<protein>
    <recommendedName>
        <fullName evidence="1">Orotate phosphoribosyltransferase</fullName>
        <shortName evidence="1">OPRT</shortName>
        <shortName evidence="1">OPRTase</shortName>
        <ecNumber evidence="1">2.4.2.10</ecNumber>
    </recommendedName>
</protein>
<name>PYRE_ERYLH</name>
<organism>
    <name type="scientific">Erythrobacter litoralis (strain HTCC2594)</name>
    <dbReference type="NCBI Taxonomy" id="314225"/>
    <lineage>
        <taxon>Bacteria</taxon>
        <taxon>Pseudomonadati</taxon>
        <taxon>Pseudomonadota</taxon>
        <taxon>Alphaproteobacteria</taxon>
        <taxon>Sphingomonadales</taxon>
        <taxon>Erythrobacteraceae</taxon>
        <taxon>Erythrobacter/Porphyrobacter group</taxon>
        <taxon>Erythrobacter</taxon>
    </lineage>
</organism>
<sequence>MTDEEVLSEFRASEALLEGHFMLSSGRHSGHYLQCARVLMNPERAGRLAMALAQKLPRELRGEIDVVVSPAMGGLIIGHEMGRALGKDAIFLERPDGEFHLRRGFRLEPGAKVLMVEDVVTTGLSSREAIEAVKREGGEVVAEVSLVDRSAGEADLGVPYYALVEINFPTFANGEVPEGLARIPVTKPGSRAK</sequence>
<comment type="function">
    <text evidence="1">Catalyzes the transfer of a ribosyl phosphate group from 5-phosphoribose 1-diphosphate to orotate, leading to the formation of orotidine monophosphate (OMP).</text>
</comment>
<comment type="catalytic activity">
    <reaction evidence="1">
        <text>orotidine 5'-phosphate + diphosphate = orotate + 5-phospho-alpha-D-ribose 1-diphosphate</text>
        <dbReference type="Rhea" id="RHEA:10380"/>
        <dbReference type="ChEBI" id="CHEBI:30839"/>
        <dbReference type="ChEBI" id="CHEBI:33019"/>
        <dbReference type="ChEBI" id="CHEBI:57538"/>
        <dbReference type="ChEBI" id="CHEBI:58017"/>
        <dbReference type="EC" id="2.4.2.10"/>
    </reaction>
</comment>
<comment type="cofactor">
    <cofactor evidence="1">
        <name>Mg(2+)</name>
        <dbReference type="ChEBI" id="CHEBI:18420"/>
    </cofactor>
</comment>
<comment type="pathway">
    <text evidence="1">Pyrimidine metabolism; UMP biosynthesis via de novo pathway; UMP from orotate: step 1/2.</text>
</comment>
<comment type="subunit">
    <text evidence="1">Homodimer.</text>
</comment>
<comment type="similarity">
    <text evidence="1">Belongs to the purine/pyrimidine phosphoribosyltransferase family. PyrE subfamily.</text>
</comment>
<feature type="chain" id="PRO_1000066232" description="Orotate phosphoribosyltransferase">
    <location>
        <begin position="1"/>
        <end position="193"/>
    </location>
</feature>
<feature type="binding site" evidence="1">
    <location>
        <begin position="117"/>
        <end position="125"/>
    </location>
    <ligand>
        <name>5-phospho-alpha-D-ribose 1-diphosphate</name>
        <dbReference type="ChEBI" id="CHEBI:58017"/>
    </ligand>
</feature>
<feature type="binding site" evidence="1">
    <location>
        <position position="121"/>
    </location>
    <ligand>
        <name>orotate</name>
        <dbReference type="ChEBI" id="CHEBI:30839"/>
    </ligand>
</feature>
<feature type="binding site" evidence="1">
    <location>
        <position position="149"/>
    </location>
    <ligand>
        <name>orotate</name>
        <dbReference type="ChEBI" id="CHEBI:30839"/>
    </ligand>
</feature>
<evidence type="ECO:0000255" key="1">
    <source>
        <dbReference type="HAMAP-Rule" id="MF_01208"/>
    </source>
</evidence>
<reference key="1">
    <citation type="journal article" date="2009" name="J. Bacteriol.">
        <title>Complete genome sequence of Erythrobacter litoralis HTCC2594.</title>
        <authorList>
            <person name="Oh H.M."/>
            <person name="Giovannoni S.J."/>
            <person name="Ferriera S."/>
            <person name="Johnson J."/>
            <person name="Cho J.C."/>
        </authorList>
    </citation>
    <scope>NUCLEOTIDE SEQUENCE [LARGE SCALE GENOMIC DNA]</scope>
    <source>
        <strain>HTCC2594</strain>
    </source>
</reference>
<accession>Q2NCF5</accession>
<dbReference type="EC" id="2.4.2.10" evidence="1"/>
<dbReference type="EMBL" id="CP000157">
    <property type="protein sequence ID" value="ABC62636.1"/>
    <property type="molecule type" value="Genomic_DNA"/>
</dbReference>
<dbReference type="RefSeq" id="WP_011413512.1">
    <property type="nucleotide sequence ID" value="NC_007722.1"/>
</dbReference>
<dbReference type="SMR" id="Q2NCF5"/>
<dbReference type="STRING" id="314225.ELI_02720"/>
<dbReference type="KEGG" id="eli:ELI_02720"/>
<dbReference type="eggNOG" id="COG0461">
    <property type="taxonomic scope" value="Bacteria"/>
</dbReference>
<dbReference type="HOGENOM" id="CLU_074878_3_0_5"/>
<dbReference type="OrthoDB" id="9783570at2"/>
<dbReference type="UniPathway" id="UPA00070">
    <property type="reaction ID" value="UER00119"/>
</dbReference>
<dbReference type="Proteomes" id="UP000008808">
    <property type="component" value="Chromosome"/>
</dbReference>
<dbReference type="GO" id="GO:0000287">
    <property type="term" value="F:magnesium ion binding"/>
    <property type="evidence" value="ECO:0007669"/>
    <property type="project" value="UniProtKB-UniRule"/>
</dbReference>
<dbReference type="GO" id="GO:0004588">
    <property type="term" value="F:orotate phosphoribosyltransferase activity"/>
    <property type="evidence" value="ECO:0007669"/>
    <property type="project" value="UniProtKB-UniRule"/>
</dbReference>
<dbReference type="GO" id="GO:0044205">
    <property type="term" value="P:'de novo' UMP biosynthetic process"/>
    <property type="evidence" value="ECO:0007669"/>
    <property type="project" value="UniProtKB-UniRule"/>
</dbReference>
<dbReference type="GO" id="GO:0019856">
    <property type="term" value="P:pyrimidine nucleobase biosynthetic process"/>
    <property type="evidence" value="ECO:0007669"/>
    <property type="project" value="InterPro"/>
</dbReference>
<dbReference type="CDD" id="cd06223">
    <property type="entry name" value="PRTases_typeI"/>
    <property type="match status" value="1"/>
</dbReference>
<dbReference type="Gene3D" id="3.40.50.2020">
    <property type="match status" value="1"/>
</dbReference>
<dbReference type="HAMAP" id="MF_01208">
    <property type="entry name" value="PyrE"/>
    <property type="match status" value="1"/>
</dbReference>
<dbReference type="InterPro" id="IPR023031">
    <property type="entry name" value="OPRT"/>
</dbReference>
<dbReference type="InterPro" id="IPR006273">
    <property type="entry name" value="Orotate_PRibTrfase_bac"/>
</dbReference>
<dbReference type="InterPro" id="IPR000836">
    <property type="entry name" value="PRibTrfase_dom"/>
</dbReference>
<dbReference type="InterPro" id="IPR029057">
    <property type="entry name" value="PRTase-like"/>
</dbReference>
<dbReference type="NCBIfam" id="TIGR01367">
    <property type="entry name" value="pyrE_Therm"/>
    <property type="match status" value="1"/>
</dbReference>
<dbReference type="PANTHER" id="PTHR19278">
    <property type="entry name" value="OROTATE PHOSPHORIBOSYLTRANSFERASE"/>
    <property type="match status" value="1"/>
</dbReference>
<dbReference type="PANTHER" id="PTHR19278:SF9">
    <property type="entry name" value="URIDINE 5'-MONOPHOSPHATE SYNTHASE"/>
    <property type="match status" value="1"/>
</dbReference>
<dbReference type="Pfam" id="PF00156">
    <property type="entry name" value="Pribosyltran"/>
    <property type="match status" value="1"/>
</dbReference>
<dbReference type="SUPFAM" id="SSF53271">
    <property type="entry name" value="PRTase-like"/>
    <property type="match status" value="1"/>
</dbReference>
<dbReference type="PROSITE" id="PS00103">
    <property type="entry name" value="PUR_PYR_PR_TRANSFER"/>
    <property type="match status" value="1"/>
</dbReference>
<keyword id="KW-0328">Glycosyltransferase</keyword>
<keyword id="KW-0460">Magnesium</keyword>
<keyword id="KW-0665">Pyrimidine biosynthesis</keyword>
<keyword id="KW-1185">Reference proteome</keyword>
<keyword id="KW-0808">Transferase</keyword>
<proteinExistence type="inferred from homology"/>